<reference key="1">
    <citation type="journal article" date="2010" name="BMC Genomics">
        <title>Salmo salar and Esox lucius full-length cDNA sequences reveal changes in evolutionary pressures on a post-tetraploidization genome.</title>
        <authorList>
            <person name="Leong J.S."/>
            <person name="Jantzen S.G."/>
            <person name="von Schalburg K.R."/>
            <person name="Cooper G.A."/>
            <person name="Messmer A.M."/>
            <person name="Liao N.Y."/>
            <person name="Munro S."/>
            <person name="Moore R."/>
            <person name="Holt R.A."/>
            <person name="Jones S.J."/>
            <person name="Davidson W.S."/>
            <person name="Koop B.F."/>
        </authorList>
    </citation>
    <scope>NUCLEOTIDE SEQUENCE [LARGE SCALE MRNA]</scope>
    <source>
        <tissue>White muscle</tissue>
    </source>
</reference>
<keyword id="KW-0963">Cytoplasm</keyword>
<keyword id="KW-0396">Initiation factor</keyword>
<keyword id="KW-0648">Protein biosynthesis</keyword>
<keyword id="KW-1185">Reference proteome</keyword>
<sequence>MATRKESTSTPTAPMASTSPGATLDSPVKQIQIEGLVVLKMIKHYQEEGQGSEVVQGVLLGLVVEDRLEITNCFPFPQHTEDDADFDEVQYQMEMMRSLRHVNIDHLHVGWYQSTYYGSFVSRALLDSQFSYQHAIEESVVLIYDPIKTAQGSLSLKAYRLTPKLMEICKEKDFSAEGLKKAMIGFEHMFEEVPIVIKNSHLINVLMWELEEKCTVADKHELLNLSSSNHLEKSLQLLMDRVDDMSQDIVKYNTYSRNLSKQQQQKHQYTQRRQQENAQRQTRGETPLPEEDVSKMFKPPQPPPRMDTLLIAGQINNYCQNVKEFTSQNLGKLFMAEALQGHNS</sequence>
<protein>
    <recommendedName>
        <fullName evidence="1">Eukaryotic translation initiation factor 3 subunit H</fullName>
        <shortName evidence="1">eIF3h</shortName>
    </recommendedName>
    <alternativeName>
        <fullName evidence="1">Eukaryotic translation initiation factor 3 subunit 3</fullName>
    </alternativeName>
    <alternativeName>
        <fullName>eIF-3-gamma</fullName>
    </alternativeName>
    <alternativeName>
        <fullName evidence="1">eIF3 p40 subunit</fullName>
    </alternativeName>
</protein>
<name>EIF3H_SALSA</name>
<evidence type="ECO:0000255" key="1">
    <source>
        <dbReference type="HAMAP-Rule" id="MF_03007"/>
    </source>
</evidence>
<evidence type="ECO:0000255" key="2">
    <source>
        <dbReference type="PROSITE-ProRule" id="PRU01182"/>
    </source>
</evidence>
<evidence type="ECO:0000256" key="3">
    <source>
        <dbReference type="SAM" id="MobiDB-lite"/>
    </source>
</evidence>
<accession>B5RI54</accession>
<feature type="chain" id="PRO_0000365178" description="Eukaryotic translation initiation factor 3 subunit H">
    <location>
        <begin position="1"/>
        <end position="344"/>
    </location>
</feature>
<feature type="domain" description="MPN" evidence="2">
    <location>
        <begin position="31"/>
        <end position="165"/>
    </location>
</feature>
<feature type="region of interest" description="Disordered" evidence="3">
    <location>
        <begin position="1"/>
        <end position="24"/>
    </location>
</feature>
<feature type="region of interest" description="Disordered" evidence="3">
    <location>
        <begin position="256"/>
        <end position="305"/>
    </location>
</feature>
<feature type="compositionally biased region" description="Low complexity" evidence="3">
    <location>
        <begin position="8"/>
        <end position="23"/>
    </location>
</feature>
<feature type="compositionally biased region" description="Low complexity" evidence="3">
    <location>
        <begin position="261"/>
        <end position="272"/>
    </location>
</feature>
<dbReference type="EMBL" id="BT043978">
    <property type="protein sequence ID" value="ACH85295.1"/>
    <property type="molecule type" value="mRNA"/>
</dbReference>
<dbReference type="SMR" id="B5RI54"/>
<dbReference type="STRING" id="8030.ENSSSAP00000067644"/>
<dbReference type="MEROPS" id="M67.971"/>
<dbReference type="PaxDb" id="8030-ENSSSAP00000067644"/>
<dbReference type="Ensembl" id="ENSSSAT00070027224">
    <property type="protein sequence ID" value="ENSSSAP00070026071"/>
    <property type="gene ID" value="ENSSSAG00070017006"/>
</dbReference>
<dbReference type="Ensembl" id="ENSSSAT00070042991">
    <property type="protein sequence ID" value="ENSSSAP00070041141"/>
    <property type="gene ID" value="ENSSSAG00070026708"/>
</dbReference>
<dbReference type="Proteomes" id="UP000087266">
    <property type="component" value="Unplaced"/>
</dbReference>
<dbReference type="GO" id="GO:0016282">
    <property type="term" value="C:eukaryotic 43S preinitiation complex"/>
    <property type="evidence" value="ECO:0007669"/>
    <property type="project" value="UniProtKB-UniRule"/>
</dbReference>
<dbReference type="GO" id="GO:0033290">
    <property type="term" value="C:eukaryotic 48S preinitiation complex"/>
    <property type="evidence" value="ECO:0007669"/>
    <property type="project" value="UniProtKB-UniRule"/>
</dbReference>
<dbReference type="GO" id="GO:0005852">
    <property type="term" value="C:eukaryotic translation initiation factor 3 complex"/>
    <property type="evidence" value="ECO:0000250"/>
    <property type="project" value="UniProtKB"/>
</dbReference>
<dbReference type="GO" id="GO:0008237">
    <property type="term" value="F:metallopeptidase activity"/>
    <property type="evidence" value="ECO:0007669"/>
    <property type="project" value="InterPro"/>
</dbReference>
<dbReference type="GO" id="GO:0003743">
    <property type="term" value="F:translation initiation factor activity"/>
    <property type="evidence" value="ECO:0007669"/>
    <property type="project" value="UniProtKB-UniRule"/>
</dbReference>
<dbReference type="GO" id="GO:0001732">
    <property type="term" value="P:formation of cytoplasmic translation initiation complex"/>
    <property type="evidence" value="ECO:0007669"/>
    <property type="project" value="UniProtKB-UniRule"/>
</dbReference>
<dbReference type="GO" id="GO:0006413">
    <property type="term" value="P:translational initiation"/>
    <property type="evidence" value="ECO:0000250"/>
    <property type="project" value="UniProtKB"/>
</dbReference>
<dbReference type="CDD" id="cd08065">
    <property type="entry name" value="MPN_eIF3h"/>
    <property type="match status" value="1"/>
</dbReference>
<dbReference type="FunFam" id="3.40.140.10:FF:000020">
    <property type="entry name" value="Eukaryotic translation initiation factor 3 subunit H"/>
    <property type="match status" value="1"/>
</dbReference>
<dbReference type="Gene3D" id="3.40.140.10">
    <property type="entry name" value="Cytidine Deaminase, domain 2"/>
    <property type="match status" value="1"/>
</dbReference>
<dbReference type="HAMAP" id="MF_03007">
    <property type="entry name" value="eIF3h"/>
    <property type="match status" value="1"/>
</dbReference>
<dbReference type="InterPro" id="IPR027524">
    <property type="entry name" value="eIF3h"/>
</dbReference>
<dbReference type="InterPro" id="IPR045810">
    <property type="entry name" value="eIF3h_C"/>
</dbReference>
<dbReference type="InterPro" id="IPR000555">
    <property type="entry name" value="JAMM/MPN+_dom"/>
</dbReference>
<dbReference type="InterPro" id="IPR050242">
    <property type="entry name" value="JAMM_MPN+_peptidase_M67A"/>
</dbReference>
<dbReference type="InterPro" id="IPR037518">
    <property type="entry name" value="MPN"/>
</dbReference>
<dbReference type="PANTHER" id="PTHR10410">
    <property type="entry name" value="EUKARYOTIC TRANSLATION INITIATION FACTOR 3 -RELATED"/>
    <property type="match status" value="1"/>
</dbReference>
<dbReference type="Pfam" id="PF19445">
    <property type="entry name" value="eIF3h_C"/>
    <property type="match status" value="1"/>
</dbReference>
<dbReference type="Pfam" id="PF01398">
    <property type="entry name" value="JAB"/>
    <property type="match status" value="1"/>
</dbReference>
<dbReference type="SMART" id="SM00232">
    <property type="entry name" value="JAB_MPN"/>
    <property type="match status" value="1"/>
</dbReference>
<dbReference type="PROSITE" id="PS50249">
    <property type="entry name" value="MPN"/>
    <property type="match status" value="1"/>
</dbReference>
<comment type="function">
    <text evidence="1">Component of the eukaryotic translation initiation factor 3 (eIF-3) complex, which is involved in protein synthesis of a specialized repertoire of mRNAs and, together with other initiation factors, stimulates binding of mRNA and methionyl-tRNAi to the 40S ribosome. The eIF-3 complex specifically targets and initiates translation of a subset of mRNAs involved in cell proliferation.</text>
</comment>
<comment type="subunit">
    <text evidence="1">Component of the eukaryotic translation initiation factor 3 (eIF-3) complex, which is composed of 13 subunits: eif3a, eif3b, eif3c, eif3d, eif3e, eif3f, eif3g, eif3h, eif3i, eif3j, eif3k, eif3l and eif3m.</text>
</comment>
<comment type="subcellular location">
    <subcellularLocation>
        <location evidence="1">Cytoplasm</location>
    </subcellularLocation>
</comment>
<comment type="similarity">
    <text evidence="1">Belongs to the eIF-3 subunit H family.</text>
</comment>
<proteinExistence type="evidence at transcript level"/>
<organism>
    <name type="scientific">Salmo salar</name>
    <name type="common">Atlantic salmon</name>
    <dbReference type="NCBI Taxonomy" id="8030"/>
    <lineage>
        <taxon>Eukaryota</taxon>
        <taxon>Metazoa</taxon>
        <taxon>Chordata</taxon>
        <taxon>Craniata</taxon>
        <taxon>Vertebrata</taxon>
        <taxon>Euteleostomi</taxon>
        <taxon>Actinopterygii</taxon>
        <taxon>Neopterygii</taxon>
        <taxon>Teleostei</taxon>
        <taxon>Protacanthopterygii</taxon>
        <taxon>Salmoniformes</taxon>
        <taxon>Salmonidae</taxon>
        <taxon>Salmoninae</taxon>
        <taxon>Salmo</taxon>
    </lineage>
</organism>
<gene>
    <name type="primary">eif3h</name>
    <name type="synonym">eif3s3</name>
</gene>